<protein>
    <recommendedName>
        <fullName>Stearoyl-[acyl-carrier-protein] 9-desaturase 2, chloroplastic</fullName>
        <shortName>Stearoyl-ACP desaturase 2</shortName>
        <ecNumber evidence="1">1.14.19.2</ecNumber>
    </recommendedName>
    <alternativeName>
        <fullName>Acyl-[acyl-carrier-protein] desaturase 2</fullName>
    </alternativeName>
    <alternativeName>
        <fullName>SSI2 homolog</fullName>
        <shortName>OsSSI2</shortName>
    </alternativeName>
</protein>
<evidence type="ECO:0000250" key="1">
    <source>
        <dbReference type="UniProtKB" id="P22337"/>
    </source>
</evidence>
<evidence type="ECO:0000255" key="2"/>
<evidence type="ECO:0000269" key="3">
    <source>
    </source>
</evidence>
<evidence type="ECO:0000305" key="4"/>
<feature type="transit peptide" description="Chloroplast" evidence="2">
    <location>
        <begin position="1"/>
        <end position="32"/>
    </location>
</feature>
<feature type="chain" id="PRO_0000401428" description="Stearoyl-[acyl-carrier-protein] 9-desaturase 2, chloroplastic">
    <location>
        <begin position="33"/>
        <end position="396"/>
    </location>
</feature>
<feature type="binding site" evidence="1">
    <location>
        <position position="138"/>
    </location>
    <ligand>
        <name>Fe cation</name>
        <dbReference type="ChEBI" id="CHEBI:24875"/>
        <label>1</label>
    </ligand>
</feature>
<feature type="binding site" evidence="1">
    <location>
        <position position="176"/>
    </location>
    <ligand>
        <name>Fe cation</name>
        <dbReference type="ChEBI" id="CHEBI:24875"/>
        <label>1</label>
    </ligand>
</feature>
<feature type="binding site" evidence="1">
    <location>
        <position position="176"/>
    </location>
    <ligand>
        <name>Fe cation</name>
        <dbReference type="ChEBI" id="CHEBI:24875"/>
        <label>2</label>
    </ligand>
</feature>
<feature type="binding site" evidence="1">
    <location>
        <position position="179"/>
    </location>
    <ligand>
        <name>Fe cation</name>
        <dbReference type="ChEBI" id="CHEBI:24875"/>
        <label>1</label>
    </ligand>
</feature>
<feature type="binding site" evidence="1">
    <location>
        <position position="229"/>
    </location>
    <ligand>
        <name>Fe cation</name>
        <dbReference type="ChEBI" id="CHEBI:24875"/>
        <label>2</label>
    </ligand>
</feature>
<feature type="binding site" evidence="1">
    <location>
        <position position="262"/>
    </location>
    <ligand>
        <name>Fe cation</name>
        <dbReference type="ChEBI" id="CHEBI:24875"/>
        <label>1</label>
    </ligand>
</feature>
<feature type="binding site" evidence="1">
    <location>
        <position position="262"/>
    </location>
    <ligand>
        <name>Fe cation</name>
        <dbReference type="ChEBI" id="CHEBI:24875"/>
        <label>2</label>
    </ligand>
</feature>
<feature type="binding site" evidence="1">
    <location>
        <position position="265"/>
    </location>
    <ligand>
        <name>Fe cation</name>
        <dbReference type="ChEBI" id="CHEBI:24875"/>
        <label>2</label>
    </ligand>
</feature>
<keyword id="KW-0150">Chloroplast</keyword>
<keyword id="KW-0275">Fatty acid biosynthesis</keyword>
<keyword id="KW-0276">Fatty acid metabolism</keyword>
<keyword id="KW-0408">Iron</keyword>
<keyword id="KW-0444">Lipid biosynthesis</keyword>
<keyword id="KW-0443">Lipid metabolism</keyword>
<keyword id="KW-0479">Metal-binding</keyword>
<keyword id="KW-0560">Oxidoreductase</keyword>
<keyword id="KW-0611">Plant defense</keyword>
<keyword id="KW-0934">Plastid</keyword>
<keyword id="KW-1185">Reference proteome</keyword>
<keyword id="KW-0809">Transit peptide</keyword>
<reference key="1">
    <citation type="journal article" date="2002" name="Nature">
        <title>The genome sequence and structure of rice chromosome 1.</title>
        <authorList>
            <person name="Sasaki T."/>
            <person name="Matsumoto T."/>
            <person name="Yamamoto K."/>
            <person name="Sakata K."/>
            <person name="Baba T."/>
            <person name="Katayose Y."/>
            <person name="Wu J."/>
            <person name="Niimura Y."/>
            <person name="Cheng Z."/>
            <person name="Nagamura Y."/>
            <person name="Antonio B.A."/>
            <person name="Kanamori H."/>
            <person name="Hosokawa S."/>
            <person name="Masukawa M."/>
            <person name="Arikawa K."/>
            <person name="Chiden Y."/>
            <person name="Hayashi M."/>
            <person name="Okamoto M."/>
            <person name="Ando T."/>
            <person name="Aoki H."/>
            <person name="Arita K."/>
            <person name="Hamada M."/>
            <person name="Harada C."/>
            <person name="Hijishita S."/>
            <person name="Honda M."/>
            <person name="Ichikawa Y."/>
            <person name="Idonuma A."/>
            <person name="Iijima M."/>
            <person name="Ikeda M."/>
            <person name="Ikeno M."/>
            <person name="Ito S."/>
            <person name="Ito T."/>
            <person name="Ito Y."/>
            <person name="Ito Y."/>
            <person name="Iwabuchi A."/>
            <person name="Kamiya K."/>
            <person name="Karasawa W."/>
            <person name="Katagiri S."/>
            <person name="Kikuta A."/>
            <person name="Kobayashi N."/>
            <person name="Kono I."/>
            <person name="Machita K."/>
            <person name="Maehara T."/>
            <person name="Mizuno H."/>
            <person name="Mizubayashi T."/>
            <person name="Mukai Y."/>
            <person name="Nagasaki H."/>
            <person name="Nakashima M."/>
            <person name="Nakama Y."/>
            <person name="Nakamichi Y."/>
            <person name="Nakamura M."/>
            <person name="Namiki N."/>
            <person name="Negishi M."/>
            <person name="Ohta I."/>
            <person name="Ono N."/>
            <person name="Saji S."/>
            <person name="Sakai K."/>
            <person name="Shibata M."/>
            <person name="Shimokawa T."/>
            <person name="Shomura A."/>
            <person name="Song J."/>
            <person name="Takazaki Y."/>
            <person name="Terasawa K."/>
            <person name="Tsuji K."/>
            <person name="Waki K."/>
            <person name="Yamagata H."/>
            <person name="Yamane H."/>
            <person name="Yoshiki S."/>
            <person name="Yoshihara R."/>
            <person name="Yukawa K."/>
            <person name="Zhong H."/>
            <person name="Iwama H."/>
            <person name="Endo T."/>
            <person name="Ito H."/>
            <person name="Hahn J.H."/>
            <person name="Kim H.-I."/>
            <person name="Eun M.-Y."/>
            <person name="Yano M."/>
            <person name="Jiang J."/>
            <person name="Gojobori T."/>
        </authorList>
    </citation>
    <scope>NUCLEOTIDE SEQUENCE [LARGE SCALE GENOMIC DNA]</scope>
    <source>
        <strain>cv. Nipponbare</strain>
    </source>
</reference>
<reference key="2">
    <citation type="journal article" date="2005" name="Nature">
        <title>The map-based sequence of the rice genome.</title>
        <authorList>
            <consortium name="International rice genome sequencing project (IRGSP)"/>
        </authorList>
    </citation>
    <scope>NUCLEOTIDE SEQUENCE [LARGE SCALE GENOMIC DNA]</scope>
    <source>
        <strain>cv. Nipponbare</strain>
    </source>
</reference>
<reference key="3">
    <citation type="journal article" date="2008" name="Nucleic Acids Res.">
        <title>The rice annotation project database (RAP-DB): 2008 update.</title>
        <authorList>
            <consortium name="The rice annotation project (RAP)"/>
        </authorList>
    </citation>
    <scope>GENOME REANNOTATION</scope>
    <source>
        <strain>cv. Nipponbare</strain>
    </source>
</reference>
<reference key="4">
    <citation type="journal article" date="2013" name="Rice">
        <title>Improvement of the Oryza sativa Nipponbare reference genome using next generation sequence and optical map data.</title>
        <authorList>
            <person name="Kawahara Y."/>
            <person name="de la Bastide M."/>
            <person name="Hamilton J.P."/>
            <person name="Kanamori H."/>
            <person name="McCombie W.R."/>
            <person name="Ouyang S."/>
            <person name="Schwartz D.C."/>
            <person name="Tanaka T."/>
            <person name="Wu J."/>
            <person name="Zhou S."/>
            <person name="Childs K.L."/>
            <person name="Davidson R.M."/>
            <person name="Lin H."/>
            <person name="Quesada-Ocampo L."/>
            <person name="Vaillancourt B."/>
            <person name="Sakai H."/>
            <person name="Lee S.S."/>
            <person name="Kim J."/>
            <person name="Numa H."/>
            <person name="Itoh T."/>
            <person name="Buell C.R."/>
            <person name="Matsumoto T."/>
        </authorList>
    </citation>
    <scope>GENOME REANNOTATION</scope>
    <source>
        <strain>cv. Nipponbare</strain>
    </source>
</reference>
<reference key="5">
    <citation type="journal article" date="2005" name="PLoS Biol.">
        <title>The genomes of Oryza sativa: a history of duplications.</title>
        <authorList>
            <person name="Yu J."/>
            <person name="Wang J."/>
            <person name="Lin W."/>
            <person name="Li S."/>
            <person name="Li H."/>
            <person name="Zhou J."/>
            <person name="Ni P."/>
            <person name="Dong W."/>
            <person name="Hu S."/>
            <person name="Zeng C."/>
            <person name="Zhang J."/>
            <person name="Zhang Y."/>
            <person name="Li R."/>
            <person name="Xu Z."/>
            <person name="Li S."/>
            <person name="Li X."/>
            <person name="Zheng H."/>
            <person name="Cong L."/>
            <person name="Lin L."/>
            <person name="Yin J."/>
            <person name="Geng J."/>
            <person name="Li G."/>
            <person name="Shi J."/>
            <person name="Liu J."/>
            <person name="Lv H."/>
            <person name="Li J."/>
            <person name="Wang J."/>
            <person name="Deng Y."/>
            <person name="Ran L."/>
            <person name="Shi X."/>
            <person name="Wang X."/>
            <person name="Wu Q."/>
            <person name="Li C."/>
            <person name="Ren X."/>
            <person name="Wang J."/>
            <person name="Wang X."/>
            <person name="Li D."/>
            <person name="Liu D."/>
            <person name="Zhang X."/>
            <person name="Ji Z."/>
            <person name="Zhao W."/>
            <person name="Sun Y."/>
            <person name="Zhang Z."/>
            <person name="Bao J."/>
            <person name="Han Y."/>
            <person name="Dong L."/>
            <person name="Ji J."/>
            <person name="Chen P."/>
            <person name="Wu S."/>
            <person name="Liu J."/>
            <person name="Xiao Y."/>
            <person name="Bu D."/>
            <person name="Tan J."/>
            <person name="Yang L."/>
            <person name="Ye C."/>
            <person name="Zhang J."/>
            <person name="Xu J."/>
            <person name="Zhou Y."/>
            <person name="Yu Y."/>
            <person name="Zhang B."/>
            <person name="Zhuang S."/>
            <person name="Wei H."/>
            <person name="Liu B."/>
            <person name="Lei M."/>
            <person name="Yu H."/>
            <person name="Li Y."/>
            <person name="Xu H."/>
            <person name="Wei S."/>
            <person name="He X."/>
            <person name="Fang L."/>
            <person name="Zhang Z."/>
            <person name="Zhang Y."/>
            <person name="Huang X."/>
            <person name="Su Z."/>
            <person name="Tong W."/>
            <person name="Li J."/>
            <person name="Tong Z."/>
            <person name="Li S."/>
            <person name="Ye J."/>
            <person name="Wang L."/>
            <person name="Fang L."/>
            <person name="Lei T."/>
            <person name="Chen C.-S."/>
            <person name="Chen H.-C."/>
            <person name="Xu Z."/>
            <person name="Li H."/>
            <person name="Huang H."/>
            <person name="Zhang F."/>
            <person name="Xu H."/>
            <person name="Li N."/>
            <person name="Zhao C."/>
            <person name="Li S."/>
            <person name="Dong L."/>
            <person name="Huang Y."/>
            <person name="Li L."/>
            <person name="Xi Y."/>
            <person name="Qi Q."/>
            <person name="Li W."/>
            <person name="Zhang B."/>
            <person name="Hu W."/>
            <person name="Zhang Y."/>
            <person name="Tian X."/>
            <person name="Jiao Y."/>
            <person name="Liang X."/>
            <person name="Jin J."/>
            <person name="Gao L."/>
            <person name="Zheng W."/>
            <person name="Hao B."/>
            <person name="Liu S.-M."/>
            <person name="Wang W."/>
            <person name="Yuan L."/>
            <person name="Cao M."/>
            <person name="McDermott J."/>
            <person name="Samudrala R."/>
            <person name="Wang J."/>
            <person name="Wong G.K.-S."/>
            <person name="Yang H."/>
        </authorList>
    </citation>
    <scope>NUCLEOTIDE SEQUENCE [LARGE SCALE GENOMIC DNA]</scope>
    <source>
        <strain>cv. Nipponbare</strain>
    </source>
</reference>
<reference key="6">
    <citation type="journal article" date="2003" name="Science">
        <title>Collection, mapping, and annotation of over 28,000 cDNA clones from japonica rice.</title>
        <authorList>
            <consortium name="The rice full-length cDNA consortium"/>
        </authorList>
    </citation>
    <scope>NUCLEOTIDE SEQUENCE [LARGE SCALE MRNA]</scope>
    <source>
        <strain>cv. Nipponbare</strain>
    </source>
</reference>
<reference key="7">
    <citation type="journal article" date="2009" name="Mol. Plant Microbe Interact.">
        <title>Suppression of the rice fatty-acid desaturase gene OsSSI2 enhances resistance to blast and leaf blight diseases in rice.</title>
        <authorList>
            <person name="Jiang C.J."/>
            <person name="Shimono M."/>
            <person name="Maeda S."/>
            <person name="Inoue H."/>
            <person name="Mori M."/>
            <person name="Hasegawa M."/>
            <person name="Sugano S."/>
            <person name="Takatsuji H."/>
        </authorList>
    </citation>
    <scope>FUNCTION</scope>
    <scope>DISRUPTION PHENOTYPE</scope>
    <scope>GENE FAMILY</scope>
</reference>
<dbReference type="EC" id="1.14.19.2" evidence="1"/>
<dbReference type="EMBL" id="AP003437">
    <property type="protein sequence ID" value="BAB86112.1"/>
    <property type="molecule type" value="Genomic_DNA"/>
</dbReference>
<dbReference type="EMBL" id="AP006843">
    <property type="protein sequence ID" value="BAD88357.1"/>
    <property type="molecule type" value="Genomic_DNA"/>
</dbReference>
<dbReference type="EMBL" id="AP008207">
    <property type="protein sequence ID" value="BAF07129.1"/>
    <property type="status" value="ALT_INIT"/>
    <property type="molecule type" value="Genomic_DNA"/>
</dbReference>
<dbReference type="EMBL" id="AP014957">
    <property type="status" value="NOT_ANNOTATED_CDS"/>
    <property type="molecule type" value="Genomic_DNA"/>
</dbReference>
<dbReference type="EMBL" id="CM000138">
    <property type="protein sequence ID" value="EAZ14642.1"/>
    <property type="molecule type" value="Genomic_DNA"/>
</dbReference>
<dbReference type="EMBL" id="AK058979">
    <property type="protein sequence ID" value="BAG86858.1"/>
    <property type="status" value="ALT_INIT"/>
    <property type="molecule type" value="mRNA"/>
</dbReference>
<dbReference type="RefSeq" id="XP_015622023.1">
    <property type="nucleotide sequence ID" value="XM_015766537.1"/>
</dbReference>
<dbReference type="SMR" id="Q8S059"/>
<dbReference type="FunCoup" id="Q8S059">
    <property type="interactions" value="684"/>
</dbReference>
<dbReference type="STRING" id="39947.Q8S059"/>
<dbReference type="PaxDb" id="39947-Q8S059"/>
<dbReference type="KEGG" id="dosa:Os01g0919900"/>
<dbReference type="eggNOG" id="ENOG502QRJK">
    <property type="taxonomic scope" value="Eukaryota"/>
</dbReference>
<dbReference type="HOGENOM" id="CLU_034505_1_1_1"/>
<dbReference type="InParanoid" id="Q8S059"/>
<dbReference type="OrthoDB" id="1924153at2759"/>
<dbReference type="UniPathway" id="UPA00199"/>
<dbReference type="Proteomes" id="UP000000763">
    <property type="component" value="Chromosome 1"/>
</dbReference>
<dbReference type="Proteomes" id="UP000007752">
    <property type="component" value="Chromosome 1"/>
</dbReference>
<dbReference type="Proteomes" id="UP000059680">
    <property type="component" value="Chromosome 1"/>
</dbReference>
<dbReference type="GO" id="GO:0009507">
    <property type="term" value="C:chloroplast"/>
    <property type="evidence" value="ECO:0007669"/>
    <property type="project" value="UniProtKB-SubCell"/>
</dbReference>
<dbReference type="GO" id="GO:0046872">
    <property type="term" value="F:metal ion binding"/>
    <property type="evidence" value="ECO:0007669"/>
    <property type="project" value="UniProtKB-KW"/>
</dbReference>
<dbReference type="GO" id="GO:0045300">
    <property type="term" value="F:stearoyl-[ACP] desaturase activity"/>
    <property type="evidence" value="ECO:0000318"/>
    <property type="project" value="GO_Central"/>
</dbReference>
<dbReference type="GO" id="GO:0006952">
    <property type="term" value="P:defense response"/>
    <property type="evidence" value="ECO:0007669"/>
    <property type="project" value="UniProtKB-KW"/>
</dbReference>
<dbReference type="GO" id="GO:0006633">
    <property type="term" value="P:fatty acid biosynthetic process"/>
    <property type="evidence" value="ECO:0007669"/>
    <property type="project" value="UniProtKB-KW"/>
</dbReference>
<dbReference type="GO" id="GO:0006631">
    <property type="term" value="P:fatty acid metabolic process"/>
    <property type="evidence" value="ECO:0000318"/>
    <property type="project" value="GO_Central"/>
</dbReference>
<dbReference type="CDD" id="cd01050">
    <property type="entry name" value="Acyl_ACP_Desat"/>
    <property type="match status" value="1"/>
</dbReference>
<dbReference type="FunFam" id="1.10.620.20:FF:000002">
    <property type="entry name" value="Stearoyl-[acyl-carrier-protein] 9-desaturase, chloroplastic"/>
    <property type="match status" value="1"/>
</dbReference>
<dbReference type="Gene3D" id="1.10.620.20">
    <property type="entry name" value="Ribonucleotide Reductase, subunit A"/>
    <property type="match status" value="1"/>
</dbReference>
<dbReference type="InterPro" id="IPR005067">
    <property type="entry name" value="Fatty_acid_desaturase-2"/>
</dbReference>
<dbReference type="InterPro" id="IPR009078">
    <property type="entry name" value="Ferritin-like_SF"/>
</dbReference>
<dbReference type="InterPro" id="IPR012348">
    <property type="entry name" value="RNR-like"/>
</dbReference>
<dbReference type="PANTHER" id="PTHR31155">
    <property type="entry name" value="ACYL- ACYL-CARRIER-PROTEIN DESATURASE-RELATED"/>
    <property type="match status" value="1"/>
</dbReference>
<dbReference type="PANTHER" id="PTHR31155:SF9">
    <property type="entry name" value="STEAROYL-[ACYL-CARRIER-PROTEIN] 9-DESATURASE 7, CHLOROPLASTIC"/>
    <property type="match status" value="1"/>
</dbReference>
<dbReference type="Pfam" id="PF03405">
    <property type="entry name" value="FA_desaturase_2"/>
    <property type="match status" value="1"/>
</dbReference>
<dbReference type="PIRSF" id="PIRSF000346">
    <property type="entry name" value="Dlt9_acylACP_des"/>
    <property type="match status" value="1"/>
</dbReference>
<dbReference type="SUPFAM" id="SSF47240">
    <property type="entry name" value="Ferritin-like"/>
    <property type="match status" value="1"/>
</dbReference>
<organism>
    <name type="scientific">Oryza sativa subsp. japonica</name>
    <name type="common">Rice</name>
    <dbReference type="NCBI Taxonomy" id="39947"/>
    <lineage>
        <taxon>Eukaryota</taxon>
        <taxon>Viridiplantae</taxon>
        <taxon>Streptophyta</taxon>
        <taxon>Embryophyta</taxon>
        <taxon>Tracheophyta</taxon>
        <taxon>Spermatophyta</taxon>
        <taxon>Magnoliopsida</taxon>
        <taxon>Liliopsida</taxon>
        <taxon>Poales</taxon>
        <taxon>Poaceae</taxon>
        <taxon>BOP clade</taxon>
        <taxon>Oryzoideae</taxon>
        <taxon>Oryzeae</taxon>
        <taxon>Oryzinae</taxon>
        <taxon>Oryza</taxon>
        <taxon>Oryza sativa</taxon>
    </lineage>
</organism>
<accession>Q8S059</accession>
<accession>Q0JGJ9</accession>
<sequence>MALRPNDVTLRLTPPLAAAARRNRRAAAGGVRVYAVASGAVSTKVENKKPFAPPREVHVQVTHSMPPQKIEIFKSLDDWARDNILSHLKPVEKCWQPQDFLPDPASDGFHDEVKELRERAKEIPDDYFVCLVGDMITEEALPTYQTMLNTLDGVRDETGASPTAWAVWTRAWTAEENRHGDLLNKYLYLTGRVDMRQIEKTIQYLIGSGMDPRTENNPYLGFIYTSFQERATFISHGNTARHAKDFGDLKLAQICGIIASDEKRHETAYTKIVEKLFEIDPDGTVLAFADMMKKKISMPAHLMFDGEDDKLFEHFSMVAQRLGVYTAKDYADILEFLVSRWKISDLTGLSSEGNKAQDYLCTLAARIRRLDERAQSRAKKAGTLPFSWVYGREVQL</sequence>
<gene>
    <name type="primary">SSI2</name>
    <name type="ordered locus">Os01g0919900</name>
    <name type="ordered locus">LOC_Os01g69080</name>
    <name type="ORF">B1793G04.1</name>
    <name type="ORF">OsJ_04566</name>
    <name type="ORF">P0678F11.28</name>
</gene>
<comment type="function">
    <text evidence="3">Converts stearoyl-ACP to oleoyl-ACP by introduction of a cis double bond between carbons 9 and 10 of the acyl chain. Required for the repression of the salicylic acid (SA) signaling pathway.</text>
</comment>
<comment type="catalytic activity">
    <reaction evidence="1">
        <text>octadecanoyl-[ACP] + 2 reduced [2Fe-2S]-[ferredoxin] + O2 + 2 H(+) = (9Z)-octadecenoyl-[ACP] + 2 oxidized [2Fe-2S]-[ferredoxin] + 2 H2O</text>
        <dbReference type="Rhea" id="RHEA:11776"/>
        <dbReference type="Rhea" id="RHEA-COMP:9656"/>
        <dbReference type="Rhea" id="RHEA-COMP:9924"/>
        <dbReference type="Rhea" id="RHEA-COMP:10000"/>
        <dbReference type="Rhea" id="RHEA-COMP:10001"/>
        <dbReference type="ChEBI" id="CHEBI:15377"/>
        <dbReference type="ChEBI" id="CHEBI:15378"/>
        <dbReference type="ChEBI" id="CHEBI:15379"/>
        <dbReference type="ChEBI" id="CHEBI:33737"/>
        <dbReference type="ChEBI" id="CHEBI:33738"/>
        <dbReference type="ChEBI" id="CHEBI:78495"/>
        <dbReference type="ChEBI" id="CHEBI:78783"/>
        <dbReference type="EC" id="1.14.19.2"/>
    </reaction>
</comment>
<comment type="cofactor">
    <cofactor evidence="1">
        <name>Fe(2+)</name>
        <dbReference type="ChEBI" id="CHEBI:29033"/>
    </cofactor>
    <text evidence="1">Binds 2 Fe(2+) ions per subunit.</text>
</comment>
<comment type="pathway">
    <text>Lipid metabolism; fatty acid metabolism.</text>
</comment>
<comment type="subunit">
    <text evidence="1">Homodimer.</text>
</comment>
<comment type="subcellular location">
    <subcellularLocation>
        <location evidence="4">Plastid</location>
        <location evidence="4">Chloroplast</location>
    </subcellularLocation>
</comment>
<comment type="disruption phenotype">
    <text evidence="3">Increased level of stearate (18:0) and reduced level of oleic acid (18:1) in leaves. Spontaneous lesion formation in leaf blades, retarded growth, slight increase in endogenous free salicylic acid (SA) levels and SA/benzothiadiazole (BTH)-specific inducible genes. Enhanced resistance to the blast fungus Magnaporthe grisea and leaf-blight bacteria Xanthomonas oryzae pv. oryzae.</text>
</comment>
<comment type="similarity">
    <text evidence="4">Belongs to the fatty acid desaturase type 2 family.</text>
</comment>
<comment type="sequence caution" evidence="4">
    <conflict type="erroneous initiation">
        <sequence resource="EMBL-CDS" id="BAF07129"/>
    </conflict>
    <text>Extended N-terminus.</text>
</comment>
<comment type="sequence caution" evidence="4">
    <conflict type="erroneous initiation">
        <sequence resource="EMBL-CDS" id="BAG86858"/>
    </conflict>
    <text>Extended N-terminus.</text>
</comment>
<proteinExistence type="evidence at transcript level"/>
<name>STAD2_ORYSJ</name>